<keyword id="KW-0963">Cytoplasm</keyword>
<keyword id="KW-0206">Cytoskeleton</keyword>
<keyword id="KW-0342">GTP-binding</keyword>
<keyword id="KW-0460">Magnesium</keyword>
<keyword id="KW-0479">Metal-binding</keyword>
<keyword id="KW-0493">Microtubule</keyword>
<keyword id="KW-0547">Nucleotide-binding</keyword>
<accession>P25862</accession>
<protein>
    <recommendedName>
        <fullName>Tubulin beta-1 chain</fullName>
    </recommendedName>
    <alternativeName>
        <fullName>Beta-1-tubulin</fullName>
    </alternativeName>
</protein>
<comment type="function">
    <text>Tubulin is the major constituent of microtubules, a cylinder consisting of laterally associated linear protofilaments composed of alpha- and beta-tubulin heterodimers. Microtubules grow by the addition of GTP-tubulin dimers to the microtubule end, where a stabilizing cap forms. Below the cap, tubulin dimers are in GDP-bound state, owing to GTPase activity of alpha-tubulin.</text>
</comment>
<comment type="cofactor">
    <cofactor evidence="1">
        <name>Mg(2+)</name>
        <dbReference type="ChEBI" id="CHEBI:18420"/>
    </cofactor>
</comment>
<comment type="subunit">
    <text>Dimer of alpha and beta chains. A typical microtubule is a hollow water-filled tube with an outer diameter of 25 nm and an inner diameter of 15 nM. Alpha-beta heterodimers associate head-to-tail to form protofilaments running lengthwise along the microtubule wall with the beta-tubulin subunit facing the microtubule plus end conferring a structural polarity. Microtubules usually have 13 protofilaments but different protofilament numbers can be found in some organisms and specialized cells.</text>
</comment>
<comment type="subcellular location">
    <subcellularLocation>
        <location>Cytoplasm</location>
        <location>Cytoskeleton</location>
    </subcellularLocation>
</comment>
<comment type="similarity">
    <text evidence="4">Belongs to the tubulin family.</text>
</comment>
<sequence>AVLMDLEPGTMDSVRTGPYGQIFRPDNFVFGQSGAGNNWAKGHYTEGAELIDSVLDVVRKEAENCDCLQGFQVCHSLGGGTGSGMGTLLISKIREEYPDRMMLTFSVFPSPKVSDTVVEPYNATLSVHQLVENADECMVLDNEALYDICFRTLKLTTPSFGDLNHLISATMSGVTCCLRFPGQLNSDLRKLAVNLIPFPRLHFFMVGFAPLTSRGSQQYRALTVPELTQQMWDSKNMMCAADPRHGRYLTASAMFRGKMSTKEVDEQMINVQNKNSSYFVEWIPNNVKSSVCDIPPTGLSMASTFIGNSTSIQEMFRRVSEQFTAMFRRKAFLHWYTGEGMDEMEFTEAESNMNDLVSEYQQYQDATADEEGEYEDEEEDLQAEDM</sequence>
<dbReference type="EMBL" id="X54852">
    <property type="protein sequence ID" value="CAA38630.1"/>
    <property type="molecule type" value="mRNA"/>
</dbReference>
<dbReference type="PIR" id="S14570">
    <property type="entry name" value="S14570"/>
</dbReference>
<dbReference type="SMR" id="P25862"/>
<dbReference type="GO" id="GO:0005737">
    <property type="term" value="C:cytoplasm"/>
    <property type="evidence" value="ECO:0007669"/>
    <property type="project" value="UniProtKB-KW"/>
</dbReference>
<dbReference type="GO" id="GO:0005874">
    <property type="term" value="C:microtubule"/>
    <property type="evidence" value="ECO:0007669"/>
    <property type="project" value="UniProtKB-KW"/>
</dbReference>
<dbReference type="GO" id="GO:0005525">
    <property type="term" value="F:GTP binding"/>
    <property type="evidence" value="ECO:0007669"/>
    <property type="project" value="UniProtKB-KW"/>
</dbReference>
<dbReference type="GO" id="GO:0003924">
    <property type="term" value="F:GTPase activity"/>
    <property type="evidence" value="ECO:0007669"/>
    <property type="project" value="InterPro"/>
</dbReference>
<dbReference type="GO" id="GO:0046872">
    <property type="term" value="F:metal ion binding"/>
    <property type="evidence" value="ECO:0007669"/>
    <property type="project" value="UniProtKB-KW"/>
</dbReference>
<dbReference type="GO" id="GO:0005200">
    <property type="term" value="F:structural constituent of cytoskeleton"/>
    <property type="evidence" value="ECO:0007669"/>
    <property type="project" value="InterPro"/>
</dbReference>
<dbReference type="GO" id="GO:0007017">
    <property type="term" value="P:microtubule-based process"/>
    <property type="evidence" value="ECO:0007669"/>
    <property type="project" value="InterPro"/>
</dbReference>
<dbReference type="CDD" id="cd02187">
    <property type="entry name" value="beta_tubulin"/>
    <property type="match status" value="1"/>
</dbReference>
<dbReference type="FunFam" id="1.10.287.600:FF:000002">
    <property type="entry name" value="Tubulin beta chain"/>
    <property type="match status" value="1"/>
</dbReference>
<dbReference type="FunFam" id="3.30.1330.20:FF:000002">
    <property type="entry name" value="Tubulin beta chain"/>
    <property type="match status" value="1"/>
</dbReference>
<dbReference type="FunFam" id="3.40.50.1440:FF:000006">
    <property type="entry name" value="Tubulin beta chain"/>
    <property type="match status" value="1"/>
</dbReference>
<dbReference type="Gene3D" id="1.10.287.600">
    <property type="entry name" value="Helix hairpin bin"/>
    <property type="match status" value="1"/>
</dbReference>
<dbReference type="Gene3D" id="3.30.1330.20">
    <property type="entry name" value="Tubulin/FtsZ, C-terminal domain"/>
    <property type="match status" value="1"/>
</dbReference>
<dbReference type="Gene3D" id="3.40.50.1440">
    <property type="entry name" value="Tubulin/FtsZ, GTPase domain"/>
    <property type="match status" value="1"/>
</dbReference>
<dbReference type="InterPro" id="IPR002453">
    <property type="entry name" value="Beta_tubulin"/>
</dbReference>
<dbReference type="InterPro" id="IPR008280">
    <property type="entry name" value="Tub_FtsZ_C"/>
</dbReference>
<dbReference type="InterPro" id="IPR000217">
    <property type="entry name" value="Tubulin"/>
</dbReference>
<dbReference type="InterPro" id="IPR037103">
    <property type="entry name" value="Tubulin/FtsZ-like_C"/>
</dbReference>
<dbReference type="InterPro" id="IPR018316">
    <property type="entry name" value="Tubulin/FtsZ_2-layer-sand-dom"/>
</dbReference>
<dbReference type="InterPro" id="IPR036525">
    <property type="entry name" value="Tubulin/FtsZ_GTPase_sf"/>
</dbReference>
<dbReference type="InterPro" id="IPR023123">
    <property type="entry name" value="Tubulin_C"/>
</dbReference>
<dbReference type="InterPro" id="IPR017975">
    <property type="entry name" value="Tubulin_CS"/>
</dbReference>
<dbReference type="InterPro" id="IPR003008">
    <property type="entry name" value="Tubulin_FtsZ_GTPase"/>
</dbReference>
<dbReference type="PANTHER" id="PTHR11588">
    <property type="entry name" value="TUBULIN"/>
    <property type="match status" value="1"/>
</dbReference>
<dbReference type="Pfam" id="PF00091">
    <property type="entry name" value="Tubulin"/>
    <property type="match status" value="1"/>
</dbReference>
<dbReference type="Pfam" id="PF03953">
    <property type="entry name" value="Tubulin_C"/>
    <property type="match status" value="1"/>
</dbReference>
<dbReference type="PRINTS" id="PR01163">
    <property type="entry name" value="BETATUBULIN"/>
</dbReference>
<dbReference type="PRINTS" id="PR01161">
    <property type="entry name" value="TUBULIN"/>
</dbReference>
<dbReference type="SMART" id="SM00864">
    <property type="entry name" value="Tubulin"/>
    <property type="match status" value="1"/>
</dbReference>
<dbReference type="SMART" id="SM00865">
    <property type="entry name" value="Tubulin_C"/>
    <property type="match status" value="1"/>
</dbReference>
<dbReference type="SUPFAM" id="SSF55307">
    <property type="entry name" value="Tubulin C-terminal domain-like"/>
    <property type="match status" value="1"/>
</dbReference>
<dbReference type="SUPFAM" id="SSF52490">
    <property type="entry name" value="Tubulin nucleotide-binding domain-like"/>
    <property type="match status" value="1"/>
</dbReference>
<dbReference type="PROSITE" id="PS00227">
    <property type="entry name" value="TUBULIN"/>
    <property type="match status" value="1"/>
</dbReference>
<name>TBB1_AVESA</name>
<reference key="1">
    <citation type="submission" date="1990-10" db="EMBL/GenBank/DDBJ databases">
        <authorList>
            <person name="Mendu N."/>
            <person name="Silflow C.D."/>
        </authorList>
    </citation>
    <scope>NUCLEOTIDE SEQUENCE [MRNA]</scope>
    <source>
        <strain>cv. Garry</strain>
    </source>
</reference>
<feature type="chain" id="PRO_0000048332" description="Tubulin beta-1 chain">
    <location>
        <begin position="1" status="less than"/>
        <end position="386"/>
    </location>
</feature>
<feature type="region of interest" description="Disordered" evidence="3">
    <location>
        <begin position="363"/>
        <end position="386"/>
    </location>
</feature>
<feature type="compositionally biased region" description="Acidic residues" evidence="3">
    <location>
        <begin position="367"/>
        <end position="386"/>
    </location>
</feature>
<feature type="binding site" evidence="1">
    <location>
        <position position="7"/>
    </location>
    <ligand>
        <name>GTP</name>
        <dbReference type="ChEBI" id="CHEBI:37565"/>
    </ligand>
</feature>
<feature type="binding site" evidence="1">
    <location>
        <position position="7"/>
    </location>
    <ligand>
        <name>Mg(2+)</name>
        <dbReference type="ChEBI" id="CHEBI:18420"/>
    </ligand>
</feature>
<feature type="binding site" evidence="2">
    <location>
        <position position="76"/>
    </location>
    <ligand>
        <name>GTP</name>
        <dbReference type="ChEBI" id="CHEBI:37565"/>
    </ligand>
</feature>
<feature type="binding site" evidence="2">
    <location>
        <position position="80"/>
    </location>
    <ligand>
        <name>GTP</name>
        <dbReference type="ChEBI" id="CHEBI:37565"/>
    </ligand>
</feature>
<feature type="binding site" evidence="2">
    <location>
        <position position="81"/>
    </location>
    <ligand>
        <name>GTP</name>
        <dbReference type="ChEBI" id="CHEBI:37565"/>
    </ligand>
</feature>
<feature type="binding site" evidence="2">
    <location>
        <position position="82"/>
    </location>
    <ligand>
        <name>GTP</name>
        <dbReference type="ChEBI" id="CHEBI:37565"/>
    </ligand>
</feature>
<feature type="binding site" evidence="2">
    <location>
        <position position="142"/>
    </location>
    <ligand>
        <name>GTP</name>
        <dbReference type="ChEBI" id="CHEBI:37565"/>
    </ligand>
</feature>
<feature type="binding site" evidence="2">
    <location>
        <position position="164"/>
    </location>
    <ligand>
        <name>GTP</name>
        <dbReference type="ChEBI" id="CHEBI:37565"/>
    </ligand>
</feature>
<feature type="non-terminal residue">
    <location>
        <position position="1"/>
    </location>
</feature>
<organism>
    <name type="scientific">Avena sativa</name>
    <name type="common">Oat</name>
    <dbReference type="NCBI Taxonomy" id="4498"/>
    <lineage>
        <taxon>Eukaryota</taxon>
        <taxon>Viridiplantae</taxon>
        <taxon>Streptophyta</taxon>
        <taxon>Embryophyta</taxon>
        <taxon>Tracheophyta</taxon>
        <taxon>Spermatophyta</taxon>
        <taxon>Magnoliopsida</taxon>
        <taxon>Liliopsida</taxon>
        <taxon>Poales</taxon>
        <taxon>Poaceae</taxon>
        <taxon>BOP clade</taxon>
        <taxon>Pooideae</taxon>
        <taxon>Poodae</taxon>
        <taxon>Poeae</taxon>
        <taxon>Poeae Chloroplast Group 1 (Aveneae type)</taxon>
        <taxon>Aveninae</taxon>
        <taxon>Avena</taxon>
    </lineage>
</organism>
<proteinExistence type="evidence at transcript level"/>
<evidence type="ECO:0000250" key="1">
    <source>
        <dbReference type="UniProtKB" id="P68363"/>
    </source>
</evidence>
<evidence type="ECO:0000250" key="2">
    <source>
        <dbReference type="UniProtKB" id="Q13509"/>
    </source>
</evidence>
<evidence type="ECO:0000256" key="3">
    <source>
        <dbReference type="SAM" id="MobiDB-lite"/>
    </source>
</evidence>
<evidence type="ECO:0000305" key="4"/>
<gene>
    <name type="primary">TUBB1</name>
    <name type="synonym">TUB1</name>
</gene>